<feature type="chain" id="PRO_1000014344" description="Glycogen synthase">
    <location>
        <begin position="1"/>
        <end position="477"/>
    </location>
</feature>
<feature type="binding site" evidence="1">
    <location>
        <position position="15"/>
    </location>
    <ligand>
        <name>ADP-alpha-D-glucose</name>
        <dbReference type="ChEBI" id="CHEBI:57498"/>
    </ligand>
</feature>
<proteinExistence type="inferred from homology"/>
<sequence>MNVLFAVSEAFPFAKTGGLADVAYSLPKALRKLGVDIRVIMPKYGDIPSDYTTKMKHLCHFTVPVGWRNQYCGIEYLNFEGVPFYFIDNEYYFKRPGYYGYYDDGERFSYFSRAVCEAIYHLDFDVDIIHVNDWHTSVIPVLLKAHYSHSPKHQKIKTVLTIHNLRYQGVFPKEVMYDLLSLPDEYFDENKLKFYDAISFLKGGIIFADKVVTVSKTYANEIRTLSHGEGLHGLLSGIGEKLVGIVNGIDYEVCNPATDKLIFVNYDANTFESRKKENKFRLQQMLNLPVSDDIVLIGMVSRLTKEKGIDLIERILSRLLTLPVQLVILGAGDYHYEQMFKYYAIAYPSKVSANICYSEELARKIYAGSDIYLMPSLTEPCGISQLIAMRYGTVPIVRETGGLKDTVKPYNQFTGEGWGFSFANYDPAELFAIIKYALSIYSDKAQWRSIVHQAMTRDNSWNASAGEYNRVYEQLLK</sequence>
<reference key="1">
    <citation type="submission" date="2007-04" db="EMBL/GenBank/DDBJ databases">
        <title>Genome sequence of the thermophilic hydrogen-producing bacterium Caldicellulosiruptor saccharolyticus DSM 8903.</title>
        <authorList>
            <person name="Copeland A."/>
            <person name="Lucas S."/>
            <person name="Lapidus A."/>
            <person name="Barry K."/>
            <person name="Detter J.C."/>
            <person name="Glavina del Rio T."/>
            <person name="Hammon N."/>
            <person name="Israni S."/>
            <person name="Dalin E."/>
            <person name="Tice H."/>
            <person name="Pitluck S."/>
            <person name="Kiss H."/>
            <person name="Brettin T."/>
            <person name="Bruce D."/>
            <person name="Han C."/>
            <person name="Schmutz J."/>
            <person name="Larimer F."/>
            <person name="Land M."/>
            <person name="Hauser L."/>
            <person name="Kyrpides N."/>
            <person name="Lykidis A."/>
            <person name="van de Werken H.J.G."/>
            <person name="Verhaart M.R.A."/>
            <person name="VanFossen A.L."/>
            <person name="Lewis D.L."/>
            <person name="Nichols J.D."/>
            <person name="Goorissen H.P."/>
            <person name="van Niel E.W.J."/>
            <person name="Stams F.J.M."/>
            <person name="Willquist K.U."/>
            <person name="Ward D.E."/>
            <person name="van der Oost J."/>
            <person name="Kelly R.M."/>
            <person name="Kengen S.M.W."/>
            <person name="Richardson P."/>
        </authorList>
    </citation>
    <scope>NUCLEOTIDE SEQUENCE [LARGE SCALE GENOMIC DNA]</scope>
    <source>
        <strain>ATCC 43494 / DSM 8903 / Tp8T 6331</strain>
    </source>
</reference>
<comment type="function">
    <text evidence="1">Synthesizes alpha-1,4-glucan chains using ADP-glucose.</text>
</comment>
<comment type="catalytic activity">
    <reaction evidence="1">
        <text>[(1-&gt;4)-alpha-D-glucosyl](n) + ADP-alpha-D-glucose = [(1-&gt;4)-alpha-D-glucosyl](n+1) + ADP + H(+)</text>
        <dbReference type="Rhea" id="RHEA:18189"/>
        <dbReference type="Rhea" id="RHEA-COMP:9584"/>
        <dbReference type="Rhea" id="RHEA-COMP:9587"/>
        <dbReference type="ChEBI" id="CHEBI:15378"/>
        <dbReference type="ChEBI" id="CHEBI:15444"/>
        <dbReference type="ChEBI" id="CHEBI:57498"/>
        <dbReference type="ChEBI" id="CHEBI:456216"/>
        <dbReference type="EC" id="2.4.1.21"/>
    </reaction>
</comment>
<comment type="pathway">
    <text evidence="1">Glycan biosynthesis; glycogen biosynthesis.</text>
</comment>
<comment type="similarity">
    <text evidence="1">Belongs to the glycosyltransferase 1 family. Bacterial/plant glycogen synthase subfamily.</text>
</comment>
<evidence type="ECO:0000255" key="1">
    <source>
        <dbReference type="HAMAP-Rule" id="MF_00484"/>
    </source>
</evidence>
<accession>A4XHL5</accession>
<gene>
    <name evidence="1" type="primary">glgA</name>
    <name type="ordered locus">Csac_0781</name>
</gene>
<protein>
    <recommendedName>
        <fullName evidence="1">Glycogen synthase</fullName>
        <ecNumber evidence="1">2.4.1.21</ecNumber>
    </recommendedName>
    <alternativeName>
        <fullName evidence="1">Starch [bacterial glycogen] synthase</fullName>
    </alternativeName>
</protein>
<name>GLGA_CALS8</name>
<dbReference type="EC" id="2.4.1.21" evidence="1"/>
<dbReference type="EMBL" id="CP000679">
    <property type="protein sequence ID" value="ABP66400.1"/>
    <property type="molecule type" value="Genomic_DNA"/>
</dbReference>
<dbReference type="RefSeq" id="WP_011916349.1">
    <property type="nucleotide sequence ID" value="NC_009437.1"/>
</dbReference>
<dbReference type="SMR" id="A4XHL5"/>
<dbReference type="STRING" id="351627.Csac_0781"/>
<dbReference type="CAZy" id="GT5">
    <property type="family name" value="Glycosyltransferase Family 5"/>
</dbReference>
<dbReference type="KEGG" id="csc:Csac_0781"/>
<dbReference type="eggNOG" id="COG0297">
    <property type="taxonomic scope" value="Bacteria"/>
</dbReference>
<dbReference type="HOGENOM" id="CLU_009583_18_2_9"/>
<dbReference type="OrthoDB" id="9808590at2"/>
<dbReference type="UniPathway" id="UPA00164"/>
<dbReference type="Proteomes" id="UP000000256">
    <property type="component" value="Chromosome"/>
</dbReference>
<dbReference type="GO" id="GO:0009011">
    <property type="term" value="F:alpha-1,4-glucan glucosyltransferase (ADP-glucose donor) activity"/>
    <property type="evidence" value="ECO:0007669"/>
    <property type="project" value="UniProtKB-UniRule"/>
</dbReference>
<dbReference type="GO" id="GO:0004373">
    <property type="term" value="F:alpha-1,4-glucan glucosyltransferase (UDP-glucose donor) activity"/>
    <property type="evidence" value="ECO:0007669"/>
    <property type="project" value="InterPro"/>
</dbReference>
<dbReference type="GO" id="GO:0005978">
    <property type="term" value="P:glycogen biosynthetic process"/>
    <property type="evidence" value="ECO:0007669"/>
    <property type="project" value="UniProtKB-UniRule"/>
</dbReference>
<dbReference type="CDD" id="cd03791">
    <property type="entry name" value="GT5_Glycogen_synthase_DULL1-like"/>
    <property type="match status" value="1"/>
</dbReference>
<dbReference type="Gene3D" id="3.40.50.2000">
    <property type="entry name" value="Glycogen Phosphorylase B"/>
    <property type="match status" value="2"/>
</dbReference>
<dbReference type="HAMAP" id="MF_00484">
    <property type="entry name" value="Glycogen_synth"/>
    <property type="match status" value="1"/>
</dbReference>
<dbReference type="InterPro" id="IPR001296">
    <property type="entry name" value="Glyco_trans_1"/>
</dbReference>
<dbReference type="InterPro" id="IPR011835">
    <property type="entry name" value="GS/SS"/>
</dbReference>
<dbReference type="InterPro" id="IPR013534">
    <property type="entry name" value="Starch_synth_cat_dom"/>
</dbReference>
<dbReference type="NCBIfam" id="TIGR02095">
    <property type="entry name" value="glgA"/>
    <property type="match status" value="1"/>
</dbReference>
<dbReference type="NCBIfam" id="NF001898">
    <property type="entry name" value="PRK00654.1-1"/>
    <property type="match status" value="1"/>
</dbReference>
<dbReference type="PANTHER" id="PTHR45825:SF11">
    <property type="entry name" value="ALPHA AMYLASE DOMAIN-CONTAINING PROTEIN"/>
    <property type="match status" value="1"/>
</dbReference>
<dbReference type="PANTHER" id="PTHR45825">
    <property type="entry name" value="GRANULE-BOUND STARCH SYNTHASE 1, CHLOROPLASTIC/AMYLOPLASTIC"/>
    <property type="match status" value="1"/>
</dbReference>
<dbReference type="Pfam" id="PF08323">
    <property type="entry name" value="Glyco_transf_5"/>
    <property type="match status" value="1"/>
</dbReference>
<dbReference type="Pfam" id="PF00534">
    <property type="entry name" value="Glycos_transf_1"/>
    <property type="match status" value="1"/>
</dbReference>
<dbReference type="SUPFAM" id="SSF53756">
    <property type="entry name" value="UDP-Glycosyltransferase/glycogen phosphorylase"/>
    <property type="match status" value="1"/>
</dbReference>
<keyword id="KW-0320">Glycogen biosynthesis</keyword>
<keyword id="KW-0328">Glycosyltransferase</keyword>
<keyword id="KW-0808">Transferase</keyword>
<organism>
    <name type="scientific">Caldicellulosiruptor saccharolyticus (strain ATCC 43494 / DSM 8903 / Tp8T 6331)</name>
    <dbReference type="NCBI Taxonomy" id="351627"/>
    <lineage>
        <taxon>Bacteria</taxon>
        <taxon>Bacillati</taxon>
        <taxon>Bacillota</taxon>
        <taxon>Bacillota incertae sedis</taxon>
        <taxon>Caldicellulosiruptorales</taxon>
        <taxon>Caldicellulosiruptoraceae</taxon>
        <taxon>Caldicellulosiruptor</taxon>
    </lineage>
</organism>